<comment type="function">
    <text evidence="1">Snake venom phospholipase A2 (PLA2) that inhibits collagen-induced platelet aggregation. PLA2 catalyzes the calcium-dependent hydrolysis of the 2-acyl groups in 3-sn-phosphoglycerides (By similarity).</text>
</comment>
<comment type="catalytic activity">
    <reaction evidence="3 4">
        <text>a 1,2-diacyl-sn-glycero-3-phosphocholine + H2O = a 1-acyl-sn-glycero-3-phosphocholine + a fatty acid + H(+)</text>
        <dbReference type="Rhea" id="RHEA:15801"/>
        <dbReference type="ChEBI" id="CHEBI:15377"/>
        <dbReference type="ChEBI" id="CHEBI:15378"/>
        <dbReference type="ChEBI" id="CHEBI:28868"/>
        <dbReference type="ChEBI" id="CHEBI:57643"/>
        <dbReference type="ChEBI" id="CHEBI:58168"/>
        <dbReference type="EC" id="3.1.1.4"/>
    </reaction>
</comment>
<comment type="cofactor">
    <cofactor evidence="1">
        <name>Ca(2+)</name>
        <dbReference type="ChEBI" id="CHEBI:29108"/>
    </cofactor>
    <text evidence="1">Binds 1 Ca(2+) ion.</text>
</comment>
<comment type="subcellular location">
    <subcellularLocation>
        <location evidence="1">Secreted</location>
    </subcellularLocation>
</comment>
<comment type="tissue specificity">
    <text>Expressed by the venom gland.</text>
</comment>
<comment type="similarity">
    <text evidence="5">Belongs to the phospholipase A2 family. Group I subfamily. D49 sub-subfamily.</text>
</comment>
<proteinExistence type="evidence at transcript level"/>
<protein>
    <recommendedName>
        <fullName>Acidic phospholipase A2 S5-32M</fullName>
        <shortName>svPLA2</shortName>
        <ecNumber>3.1.1.4</ecNumber>
    </recommendedName>
    <alternativeName>
        <fullName>ASPLA10</fullName>
    </alternativeName>
    <alternativeName>
        <fullName>Phosphatidylcholine 2-acylhydrolase</fullName>
    </alternativeName>
</protein>
<organism>
    <name type="scientific">Austrelaps superbus</name>
    <name type="common">Lowland copperhead snake</name>
    <name type="synonym">Hoplocephalus superbus</name>
    <dbReference type="NCBI Taxonomy" id="29156"/>
    <lineage>
        <taxon>Eukaryota</taxon>
        <taxon>Metazoa</taxon>
        <taxon>Chordata</taxon>
        <taxon>Craniata</taxon>
        <taxon>Vertebrata</taxon>
        <taxon>Euteleostomi</taxon>
        <taxon>Lepidosauria</taxon>
        <taxon>Squamata</taxon>
        <taxon>Bifurcata</taxon>
        <taxon>Unidentata</taxon>
        <taxon>Episquamata</taxon>
        <taxon>Toxicofera</taxon>
        <taxon>Serpentes</taxon>
        <taxon>Colubroidea</taxon>
        <taxon>Elapidae</taxon>
        <taxon>Hydrophiinae</taxon>
        <taxon>Austrelaps</taxon>
    </lineage>
</organism>
<sequence>MYPAHLLVLLAVCVSLLGAASIPPQPLNLVQFSYLIQCANHGSRATWHYTDYGCYCGKGGSGTPVDELDRCCKIHDDCYGEAEKKGCYPKMSAYDYYCGENGPYCRNIKKECQRFVCDCDVEAAKCFARAPYNDANWNIDTKKRCQ</sequence>
<name>PA2AA_AUSSU</name>
<dbReference type="EC" id="3.1.1.4"/>
<dbReference type="EMBL" id="AF184136">
    <property type="protein sequence ID" value="AAD56559.1"/>
    <property type="molecule type" value="mRNA"/>
</dbReference>
<dbReference type="SMR" id="Q9PUH4"/>
<dbReference type="GO" id="GO:0005576">
    <property type="term" value="C:extracellular region"/>
    <property type="evidence" value="ECO:0007669"/>
    <property type="project" value="UniProtKB-SubCell"/>
</dbReference>
<dbReference type="GO" id="GO:0005509">
    <property type="term" value="F:calcium ion binding"/>
    <property type="evidence" value="ECO:0007669"/>
    <property type="project" value="InterPro"/>
</dbReference>
<dbReference type="GO" id="GO:0047498">
    <property type="term" value="F:calcium-dependent phospholipase A2 activity"/>
    <property type="evidence" value="ECO:0007669"/>
    <property type="project" value="TreeGrafter"/>
</dbReference>
<dbReference type="GO" id="GO:0005543">
    <property type="term" value="F:phospholipid binding"/>
    <property type="evidence" value="ECO:0007669"/>
    <property type="project" value="TreeGrafter"/>
</dbReference>
<dbReference type="GO" id="GO:0090729">
    <property type="term" value="F:toxin activity"/>
    <property type="evidence" value="ECO:0007669"/>
    <property type="project" value="UniProtKB-KW"/>
</dbReference>
<dbReference type="GO" id="GO:0050482">
    <property type="term" value="P:arachidonate secretion"/>
    <property type="evidence" value="ECO:0007669"/>
    <property type="project" value="InterPro"/>
</dbReference>
<dbReference type="GO" id="GO:0016042">
    <property type="term" value="P:lipid catabolic process"/>
    <property type="evidence" value="ECO:0007669"/>
    <property type="project" value="UniProtKB-KW"/>
</dbReference>
<dbReference type="GO" id="GO:0006644">
    <property type="term" value="P:phospholipid metabolic process"/>
    <property type="evidence" value="ECO:0007669"/>
    <property type="project" value="InterPro"/>
</dbReference>
<dbReference type="CDD" id="cd00125">
    <property type="entry name" value="PLA2c"/>
    <property type="match status" value="1"/>
</dbReference>
<dbReference type="FunFam" id="1.20.90.10:FF:000007">
    <property type="entry name" value="Acidic phospholipase A2"/>
    <property type="match status" value="1"/>
</dbReference>
<dbReference type="Gene3D" id="1.20.90.10">
    <property type="entry name" value="Phospholipase A2 domain"/>
    <property type="match status" value="1"/>
</dbReference>
<dbReference type="InterPro" id="IPR001211">
    <property type="entry name" value="PLipase_A2"/>
</dbReference>
<dbReference type="InterPro" id="IPR033112">
    <property type="entry name" value="PLipase_A2_Asp_AS"/>
</dbReference>
<dbReference type="InterPro" id="IPR016090">
    <property type="entry name" value="PLipase_A2_dom"/>
</dbReference>
<dbReference type="InterPro" id="IPR036444">
    <property type="entry name" value="PLipase_A2_dom_sf"/>
</dbReference>
<dbReference type="InterPro" id="IPR033113">
    <property type="entry name" value="PLipase_A2_His_AS"/>
</dbReference>
<dbReference type="PANTHER" id="PTHR11716:SF51">
    <property type="entry name" value="PHOSPHOLIPASE A2"/>
    <property type="match status" value="1"/>
</dbReference>
<dbReference type="PANTHER" id="PTHR11716">
    <property type="entry name" value="PHOSPHOLIPASE A2 FAMILY MEMBER"/>
    <property type="match status" value="1"/>
</dbReference>
<dbReference type="Pfam" id="PF00068">
    <property type="entry name" value="Phospholip_A2_1"/>
    <property type="match status" value="1"/>
</dbReference>
<dbReference type="PRINTS" id="PR00389">
    <property type="entry name" value="PHPHLIPASEA2"/>
</dbReference>
<dbReference type="SMART" id="SM00085">
    <property type="entry name" value="PA2c"/>
    <property type="match status" value="1"/>
</dbReference>
<dbReference type="SUPFAM" id="SSF48619">
    <property type="entry name" value="Phospholipase A2, PLA2"/>
    <property type="match status" value="1"/>
</dbReference>
<dbReference type="PROSITE" id="PS00119">
    <property type="entry name" value="PA2_ASP"/>
    <property type="match status" value="1"/>
</dbReference>
<dbReference type="PROSITE" id="PS00118">
    <property type="entry name" value="PA2_HIS"/>
    <property type="match status" value="1"/>
</dbReference>
<accession>Q9PUH4</accession>
<feature type="signal peptide" evidence="2">
    <location>
        <begin position="1"/>
        <end position="19"/>
    </location>
</feature>
<feature type="propeptide" id="PRO_0000022803" evidence="2">
    <location>
        <begin position="20"/>
        <end position="27"/>
    </location>
</feature>
<feature type="chain" id="PRO_0000022804" description="Acidic phospholipase A2 S5-32M">
    <location>
        <begin position="28"/>
        <end position="146"/>
    </location>
</feature>
<feature type="active site" evidence="1">
    <location>
        <position position="75"/>
    </location>
</feature>
<feature type="active site" evidence="1">
    <location>
        <position position="120"/>
    </location>
</feature>
<feature type="binding site" evidence="1">
    <location>
        <position position="55"/>
    </location>
    <ligand>
        <name>Ca(2+)</name>
        <dbReference type="ChEBI" id="CHEBI:29108"/>
    </ligand>
</feature>
<feature type="binding site" evidence="1">
    <location>
        <position position="57"/>
    </location>
    <ligand>
        <name>Ca(2+)</name>
        <dbReference type="ChEBI" id="CHEBI:29108"/>
    </ligand>
</feature>
<feature type="binding site" evidence="1">
    <location>
        <position position="59"/>
    </location>
    <ligand>
        <name>Ca(2+)</name>
        <dbReference type="ChEBI" id="CHEBI:29108"/>
    </ligand>
</feature>
<feature type="binding site" evidence="1">
    <location>
        <position position="76"/>
    </location>
    <ligand>
        <name>Ca(2+)</name>
        <dbReference type="ChEBI" id="CHEBI:29108"/>
    </ligand>
</feature>
<feature type="disulfide bond" evidence="1">
    <location>
        <begin position="38"/>
        <end position="98"/>
    </location>
</feature>
<feature type="disulfide bond" evidence="1">
    <location>
        <begin position="54"/>
        <end position="145"/>
    </location>
</feature>
<feature type="disulfide bond" evidence="1">
    <location>
        <begin position="56"/>
        <end position="72"/>
    </location>
</feature>
<feature type="disulfide bond" evidence="1">
    <location>
        <begin position="71"/>
        <end position="126"/>
    </location>
</feature>
<feature type="disulfide bond" evidence="1">
    <location>
        <begin position="78"/>
        <end position="119"/>
    </location>
</feature>
<feature type="disulfide bond" evidence="1">
    <location>
        <begin position="87"/>
        <end position="112"/>
    </location>
</feature>
<feature type="disulfide bond" evidence="1">
    <location>
        <begin position="105"/>
        <end position="117"/>
    </location>
</feature>
<evidence type="ECO:0000250" key="1"/>
<evidence type="ECO:0000255" key="2"/>
<evidence type="ECO:0000255" key="3">
    <source>
        <dbReference type="PROSITE-ProRule" id="PRU10035"/>
    </source>
</evidence>
<evidence type="ECO:0000255" key="4">
    <source>
        <dbReference type="PROSITE-ProRule" id="PRU10036"/>
    </source>
</evidence>
<evidence type="ECO:0000305" key="5"/>
<reference key="1">
    <citation type="journal article" date="2000" name="Arch. Biochem. Biophys.">
        <title>Phospholipase A(2) with platelet aggregation inhibitor activity from Austrelaps superbus venom: protein purification and cDNA cloning.</title>
        <authorList>
            <person name="Singh S.B."/>
            <person name="Armugam A."/>
            <person name="Kini R.M."/>
            <person name="Jeyaseelan K."/>
        </authorList>
    </citation>
    <scope>NUCLEOTIDE SEQUENCE [MRNA]</scope>
    <source>
        <tissue>Venom gland</tissue>
    </source>
</reference>
<keyword id="KW-0106">Calcium</keyword>
<keyword id="KW-1015">Disulfide bond</keyword>
<keyword id="KW-1199">Hemostasis impairing toxin</keyword>
<keyword id="KW-0378">Hydrolase</keyword>
<keyword id="KW-0442">Lipid degradation</keyword>
<keyword id="KW-0443">Lipid metabolism</keyword>
<keyword id="KW-0479">Metal-binding</keyword>
<keyword id="KW-1201">Platelet aggregation inhibiting toxin</keyword>
<keyword id="KW-0964">Secreted</keyword>
<keyword id="KW-0732">Signal</keyword>
<keyword id="KW-0800">Toxin</keyword>